<sequence>MNPHQIIKRPLITEKNTNLMRFNKYSFEVDRNATKPQIKRAIEEIFNVRVTAVHTMNVRGKLRRRGRQYGYTADWKKAIVTLAEGDRIDLFEGA</sequence>
<accession>A5USI7</accession>
<protein>
    <recommendedName>
        <fullName evidence="1">Large ribosomal subunit protein uL23</fullName>
    </recommendedName>
    <alternativeName>
        <fullName evidence="2">50S ribosomal protein L23</fullName>
    </alternativeName>
</protein>
<gene>
    <name evidence="1" type="primary">rplW</name>
    <name type="ordered locus">RoseRS_1183</name>
</gene>
<name>RL23_ROSS1</name>
<comment type="function">
    <text evidence="1">One of the early assembly proteins it binds 23S rRNA. One of the proteins that surrounds the polypeptide exit tunnel on the outside of the ribosome. Forms the main docking site for trigger factor binding to the ribosome.</text>
</comment>
<comment type="subunit">
    <text evidence="1">Part of the 50S ribosomal subunit. Contacts protein L29, and trigger factor when it is bound to the ribosome.</text>
</comment>
<comment type="similarity">
    <text evidence="1">Belongs to the universal ribosomal protein uL23 family.</text>
</comment>
<dbReference type="EMBL" id="CP000686">
    <property type="protein sequence ID" value="ABQ89590.1"/>
    <property type="molecule type" value="Genomic_DNA"/>
</dbReference>
<dbReference type="RefSeq" id="WP_011955943.1">
    <property type="nucleotide sequence ID" value="NC_009523.1"/>
</dbReference>
<dbReference type="SMR" id="A5USI7"/>
<dbReference type="STRING" id="357808.RoseRS_1183"/>
<dbReference type="KEGG" id="rrs:RoseRS_1183"/>
<dbReference type="eggNOG" id="COG0089">
    <property type="taxonomic scope" value="Bacteria"/>
</dbReference>
<dbReference type="HOGENOM" id="CLU_037562_3_2_0"/>
<dbReference type="OrthoDB" id="9793353at2"/>
<dbReference type="Proteomes" id="UP000006554">
    <property type="component" value="Chromosome"/>
</dbReference>
<dbReference type="GO" id="GO:1990904">
    <property type="term" value="C:ribonucleoprotein complex"/>
    <property type="evidence" value="ECO:0007669"/>
    <property type="project" value="UniProtKB-KW"/>
</dbReference>
<dbReference type="GO" id="GO:0005840">
    <property type="term" value="C:ribosome"/>
    <property type="evidence" value="ECO:0007669"/>
    <property type="project" value="UniProtKB-KW"/>
</dbReference>
<dbReference type="GO" id="GO:0019843">
    <property type="term" value="F:rRNA binding"/>
    <property type="evidence" value="ECO:0007669"/>
    <property type="project" value="UniProtKB-UniRule"/>
</dbReference>
<dbReference type="GO" id="GO:0003735">
    <property type="term" value="F:structural constituent of ribosome"/>
    <property type="evidence" value="ECO:0007669"/>
    <property type="project" value="InterPro"/>
</dbReference>
<dbReference type="GO" id="GO:0006412">
    <property type="term" value="P:translation"/>
    <property type="evidence" value="ECO:0007669"/>
    <property type="project" value="UniProtKB-UniRule"/>
</dbReference>
<dbReference type="FunFam" id="3.30.70.330:FF:000001">
    <property type="entry name" value="50S ribosomal protein L23"/>
    <property type="match status" value="1"/>
</dbReference>
<dbReference type="Gene3D" id="3.30.70.330">
    <property type="match status" value="1"/>
</dbReference>
<dbReference type="HAMAP" id="MF_01369_B">
    <property type="entry name" value="Ribosomal_uL23_B"/>
    <property type="match status" value="1"/>
</dbReference>
<dbReference type="InterPro" id="IPR012677">
    <property type="entry name" value="Nucleotide-bd_a/b_plait_sf"/>
</dbReference>
<dbReference type="InterPro" id="IPR013025">
    <property type="entry name" value="Ribosomal_uL23-like"/>
</dbReference>
<dbReference type="InterPro" id="IPR012678">
    <property type="entry name" value="Ribosomal_uL23/eL15/eS24_sf"/>
</dbReference>
<dbReference type="InterPro" id="IPR001014">
    <property type="entry name" value="Ribosomal_uL23_CS"/>
</dbReference>
<dbReference type="NCBIfam" id="NF004359">
    <property type="entry name" value="PRK05738.1-3"/>
    <property type="match status" value="1"/>
</dbReference>
<dbReference type="NCBIfam" id="NF004363">
    <property type="entry name" value="PRK05738.2-4"/>
    <property type="match status" value="1"/>
</dbReference>
<dbReference type="NCBIfam" id="NF004366">
    <property type="entry name" value="PRK05738.3-2"/>
    <property type="match status" value="1"/>
</dbReference>
<dbReference type="PANTHER" id="PTHR11620">
    <property type="entry name" value="60S RIBOSOMAL PROTEIN L23A"/>
    <property type="match status" value="1"/>
</dbReference>
<dbReference type="Pfam" id="PF00276">
    <property type="entry name" value="Ribosomal_L23"/>
    <property type="match status" value="1"/>
</dbReference>
<dbReference type="SUPFAM" id="SSF54189">
    <property type="entry name" value="Ribosomal proteins S24e, L23 and L15e"/>
    <property type="match status" value="1"/>
</dbReference>
<dbReference type="PROSITE" id="PS00050">
    <property type="entry name" value="RIBOSOMAL_L23"/>
    <property type="match status" value="1"/>
</dbReference>
<feature type="chain" id="PRO_1000068152" description="Large ribosomal subunit protein uL23">
    <location>
        <begin position="1"/>
        <end position="94"/>
    </location>
</feature>
<proteinExistence type="inferred from homology"/>
<reference key="1">
    <citation type="submission" date="2007-04" db="EMBL/GenBank/DDBJ databases">
        <title>Complete sequence of Roseiflexus sp. RS-1.</title>
        <authorList>
            <consortium name="US DOE Joint Genome Institute"/>
            <person name="Copeland A."/>
            <person name="Lucas S."/>
            <person name="Lapidus A."/>
            <person name="Barry K."/>
            <person name="Detter J.C."/>
            <person name="Glavina del Rio T."/>
            <person name="Hammon N."/>
            <person name="Israni S."/>
            <person name="Dalin E."/>
            <person name="Tice H."/>
            <person name="Pitluck S."/>
            <person name="Chertkov O."/>
            <person name="Brettin T."/>
            <person name="Bruce D."/>
            <person name="Han C."/>
            <person name="Schmutz J."/>
            <person name="Larimer F."/>
            <person name="Land M."/>
            <person name="Hauser L."/>
            <person name="Kyrpides N."/>
            <person name="Mikhailova N."/>
            <person name="Bryant D.A."/>
            <person name="Richardson P."/>
        </authorList>
    </citation>
    <scope>NUCLEOTIDE SEQUENCE [LARGE SCALE GENOMIC DNA]</scope>
    <source>
        <strain>RS-1</strain>
    </source>
</reference>
<evidence type="ECO:0000255" key="1">
    <source>
        <dbReference type="HAMAP-Rule" id="MF_01369"/>
    </source>
</evidence>
<evidence type="ECO:0000305" key="2"/>
<organism>
    <name type="scientific">Roseiflexus sp. (strain RS-1)</name>
    <dbReference type="NCBI Taxonomy" id="357808"/>
    <lineage>
        <taxon>Bacteria</taxon>
        <taxon>Bacillati</taxon>
        <taxon>Chloroflexota</taxon>
        <taxon>Chloroflexia</taxon>
        <taxon>Chloroflexales</taxon>
        <taxon>Roseiflexineae</taxon>
        <taxon>Roseiflexaceae</taxon>
        <taxon>Roseiflexus</taxon>
    </lineage>
</organism>
<keyword id="KW-0687">Ribonucleoprotein</keyword>
<keyword id="KW-0689">Ribosomal protein</keyword>
<keyword id="KW-0694">RNA-binding</keyword>
<keyword id="KW-0699">rRNA-binding</keyword>